<sequence>MSQSETRRGRRGTREETLEKWITARKKAEELEKDLRKTRKTIKKLEEENPWLGNIVGIIRKGKDGEGAPPAKRPRTDQMEVDSGPGKRPHKSGFTDKEREDHRRRKALENKKKQLSAGGKILSKEEEEELRRLTDEDEERKRRVAGPRVGDVNPSRGGPRGAPGGGFVPQMAGVPESPFSRTGEGLDIRGTQGFPWVSPSPPQQRLPLLECTPQ</sequence>
<accession>P0C6L4</accession>
<comment type="function">
    <text evidence="1">Following virus entry into host cell, provides nuclear import of HDV RNPs thanks to its nuclear localization signal. Needs co-infection with hepatitis B virus to provide surface proteins, otherwise there is no packaging or budding. Packages the HDV ribonucleoprotein in hepatitis B virus empty particles. Interacts with both HDV genomic RNA and cytoplasmic tail of HBsAg. May inhibit viral RNA replication (By similarity).</text>
</comment>
<comment type="subunit">
    <text evidence="1">Homodimer. Homooctamer. Interacts with HBV HBsAg. May interact with clathrin to induce virion budding (By similarity).</text>
</comment>
<comment type="subcellular location">
    <subcellularLocation>
        <location>Virion</location>
    </subcellularLocation>
    <subcellularLocation>
        <location>Host nucleus</location>
        <location>Host nucleolus</location>
    </subcellularLocation>
    <text evidence="1">isoprenylated in the cytoplasm, and translocates in the nucleus possibly after phosphorylation. Translocates after to nuclear speckle, then to the ER membrane where interaction with Hepatitis B virus antigene takes place (By similarity).</text>
</comment>
<comment type="PTM">
    <text evidence="1">Prenylated by host farnesyl-transferase in the cytoplasm prior to nucleus translocation.</text>
</comment>
<comment type="PTM">
    <text evidence="1">Phosphorylated at serines by host CK2 and other kinases. phosphorylation does not seem to be important for its function (By similarity).</text>
</comment>
<comment type="RNA editing">
    <location>
        <position position="196" evidence="1"/>
    </location>
    <text evidence="1">Partially edited. RNA editing at this position occurs on the antigenomic strand and consists of a conversion of A to G catalyzed by the cellular enzyme ADAR1. The unedited RNA version gives rise to the small delta antigen (AC P69618), which ends with a nonsense codon at position 196. In the edited version, this amber codon is modified to a tryptophan codon and gives rise to the large delta antigen protein. S-HDAg suppresses editing of non-replicating antigenomic RNA, thereby regulating the extent of editing (By similarity).</text>
</comment>
<comment type="miscellaneous">
    <text>This strain belongs to the genotype II found only in East Asia.</text>
</comment>
<comment type="similarity">
    <text evidence="7">Belongs to the hepatitis delta antigen family.</text>
</comment>
<dbReference type="EMBL" id="X60193">
    <property type="protein sequence ID" value="CAA42749.1"/>
    <property type="status" value="ALT_TERM"/>
    <property type="molecule type" value="Genomic_RNA"/>
</dbReference>
<dbReference type="PIR" id="B36409">
    <property type="entry name" value="SAVLDS"/>
</dbReference>
<dbReference type="SMR" id="P0C6L4"/>
<dbReference type="Proteomes" id="UP000008105">
    <property type="component" value="Segment"/>
</dbReference>
<dbReference type="GO" id="GO:0043657">
    <property type="term" value="C:host cell"/>
    <property type="evidence" value="ECO:0007669"/>
    <property type="project" value="GOC"/>
</dbReference>
<dbReference type="GO" id="GO:0044196">
    <property type="term" value="C:host cell nucleolus"/>
    <property type="evidence" value="ECO:0007669"/>
    <property type="project" value="UniProtKB-SubCell"/>
</dbReference>
<dbReference type="GO" id="GO:0044423">
    <property type="term" value="C:virion component"/>
    <property type="evidence" value="ECO:0007669"/>
    <property type="project" value="UniProtKB-KW"/>
</dbReference>
<dbReference type="GO" id="GO:0003723">
    <property type="term" value="F:RNA binding"/>
    <property type="evidence" value="ECO:0007669"/>
    <property type="project" value="UniProtKB-KW"/>
</dbReference>
<dbReference type="GO" id="GO:0046718">
    <property type="term" value="P:symbiont entry into host cell"/>
    <property type="evidence" value="ECO:0007669"/>
    <property type="project" value="UniProtKB-KW"/>
</dbReference>
<dbReference type="GO" id="GO:0075732">
    <property type="term" value="P:viral penetration into host nucleus"/>
    <property type="evidence" value="ECO:0007669"/>
    <property type="project" value="UniProtKB-KW"/>
</dbReference>
<dbReference type="Gene3D" id="4.10.220.40">
    <property type="entry name" value="Delta antigen, N-terminal"/>
    <property type="match status" value="1"/>
</dbReference>
<dbReference type="InterPro" id="IPR027403">
    <property type="entry name" value="Delta_antigen_N"/>
</dbReference>
<dbReference type="InterPro" id="IPR037517">
    <property type="entry name" value="HDAG_dom"/>
</dbReference>
<dbReference type="InterPro" id="IPR002506">
    <property type="entry name" value="HDV_ag"/>
</dbReference>
<dbReference type="Pfam" id="PF01517">
    <property type="entry name" value="HDV_ag"/>
    <property type="match status" value="1"/>
</dbReference>
<dbReference type="SUPFAM" id="SSF58108">
    <property type="entry name" value="Oligomerization domain of hepatitis delta antigen"/>
    <property type="match status" value="1"/>
</dbReference>
<dbReference type="PROSITE" id="PS51838">
    <property type="entry name" value="HDAG"/>
    <property type="match status" value="1"/>
</dbReference>
<reference key="1">
    <citation type="journal article" date="1991" name="Nucleic Acids Res.">
        <title>Complete nucleotide sequence of hepatitis delta virus RNA in Japan.</title>
        <authorList>
            <person name="Imazeki F."/>
            <person name="Omata M."/>
            <person name="Ohto M."/>
        </authorList>
    </citation>
    <scope>NUCLEOTIDE SEQUENCE [GENOMIC RNA]</scope>
</reference>
<reference key="2">
    <citation type="journal article" date="2005" name="Acta Virol.">
        <title>Hepatitis D.</title>
        <authorList>
            <person name="Husa P."/>
            <person name="Linhartova A."/>
            <person name="Nemecek V."/>
            <person name="Husova L."/>
        </authorList>
    </citation>
    <scope>REVIEW</scope>
</reference>
<reference key="3">
    <citation type="journal article" date="2006" name="Curr. Top. Microbiol. Immunol.">
        <title>Post-translational modification of delta antigen of hepatitis D virus.</title>
        <authorList>
            <person name="Huang W.H."/>
            <person name="Chen C.W."/>
            <person name="Wu H.L."/>
            <person name="Chen P.J."/>
        </authorList>
    </citation>
    <scope>REVIEW</scope>
</reference>
<organismHost>
    <name type="scientific">Homo sapiens</name>
    <name type="common">Human</name>
    <dbReference type="NCBI Taxonomy" id="9606"/>
</organismHost>
<evidence type="ECO:0000250" key="1"/>
<evidence type="ECO:0000250" key="2">
    <source>
        <dbReference type="UniProtKB" id="P0C6L3"/>
    </source>
</evidence>
<evidence type="ECO:0000250" key="3">
    <source>
        <dbReference type="UniProtKB" id="P29996"/>
    </source>
</evidence>
<evidence type="ECO:0000255" key="4"/>
<evidence type="ECO:0000255" key="5">
    <source>
        <dbReference type="PROSITE-ProRule" id="PRU01183"/>
    </source>
</evidence>
<evidence type="ECO:0000256" key="6">
    <source>
        <dbReference type="SAM" id="MobiDB-lite"/>
    </source>
</evidence>
<evidence type="ECO:0000305" key="7"/>
<feature type="chain" id="PRO_0000038126" description="Large delta antigen">
    <location>
        <begin position="1"/>
        <end position="211"/>
    </location>
</feature>
<feature type="propeptide" id="PRO_0000396793" description="Removed in mature form" evidence="3">
    <location>
        <begin position="212"/>
        <end position="214"/>
    </location>
</feature>
<feature type="domain" description="HDAg" evidence="5">
    <location>
        <begin position="21"/>
        <end position="195"/>
    </location>
</feature>
<feature type="region of interest" description="Dimerization" evidence="4">
    <location>
        <begin position="13"/>
        <end position="60"/>
    </location>
</feature>
<feature type="region of interest" description="Disordered" evidence="6">
    <location>
        <begin position="58"/>
        <end position="214"/>
    </location>
</feature>
<feature type="region of interest" description="RNA-binding" evidence="5">
    <location>
        <begin position="97"/>
        <end position="107"/>
    </location>
</feature>
<feature type="region of interest" description="RNAPII-binding" evidence="5">
    <location>
        <begin position="130"/>
        <end position="195"/>
    </location>
</feature>
<feature type="region of interest" description="RNA-binding" evidence="5">
    <location>
        <begin position="136"/>
        <end position="146"/>
    </location>
</feature>
<feature type="short sequence motif" description="Nuclear localization signal" evidence="3">
    <location>
        <begin position="66"/>
        <end position="75"/>
    </location>
</feature>
<feature type="compositionally biased region" description="Basic and acidic residues" evidence="6">
    <location>
        <begin position="93"/>
        <end position="112"/>
    </location>
</feature>
<feature type="compositionally biased region" description="Gly residues" evidence="6">
    <location>
        <begin position="158"/>
        <end position="167"/>
    </location>
</feature>
<feature type="compositionally biased region" description="Low complexity" evidence="6">
    <location>
        <begin position="205"/>
        <end position="214"/>
    </location>
</feature>
<feature type="modified residue" description="Phosphoserine; by host" evidence="3">
    <location>
        <position position="2"/>
    </location>
</feature>
<feature type="modified residue" description="Omega-N-methylated arginine; by host" evidence="2">
    <location>
        <position position="14"/>
    </location>
</feature>
<feature type="modified residue" description="N6-acetyllysine; by host" evidence="2">
    <location>
        <position position="72"/>
    </location>
</feature>
<feature type="modified residue" description="Phosphoserine; by host" evidence="3">
    <location>
        <position position="123"/>
    </location>
</feature>
<feature type="modified residue" description="Phosphoserine; by host" evidence="3">
    <location>
        <position position="177"/>
    </location>
</feature>
<feature type="modified residue" description="Cysteine methyl ester; by host" evidence="3">
    <location>
        <position position="211"/>
    </location>
</feature>
<feature type="lipid moiety-binding region" description="S-farnesyl cysteine; by host" evidence="3">
    <location>
        <position position="211"/>
    </location>
</feature>
<name>LHDAG_HDV83</name>
<protein>
    <recommendedName>
        <fullName>Large delta antigen</fullName>
        <shortName>L-HDAg</shortName>
    </recommendedName>
    <alternativeName>
        <fullName>p27</fullName>
    </alternativeName>
</protein>
<keyword id="KW-0007">Acetylation</keyword>
<keyword id="KW-1048">Host nucleus</keyword>
<keyword id="KW-0449">Lipoprotein</keyword>
<keyword id="KW-0488">Methylation</keyword>
<keyword id="KW-0597">Phosphoprotein</keyword>
<keyword id="KW-0636">Prenylation</keyword>
<keyword id="KW-0691">RNA editing</keyword>
<keyword id="KW-0694">RNA-binding</keyword>
<keyword id="KW-1163">Viral penetration into host nucleus</keyword>
<keyword id="KW-0946">Virion</keyword>
<keyword id="KW-1160">Virus entry into host cell</keyword>
<proteinExistence type="inferred from homology"/>
<organism>
    <name type="scientific">Hepatitis delta virus genotype II (isolate 7/18/83)</name>
    <name type="common">HDV</name>
    <dbReference type="NCBI Taxonomy" id="10421"/>
    <lineage>
        <taxon>Viruses</taxon>
        <taxon>Ribozyviria</taxon>
        <taxon>Kolmioviridae</taxon>
        <taxon>Deltavirus</taxon>
        <taxon>Hepatitis delta virus</taxon>
    </lineage>
</organism>